<name>SYTC_SULAC</name>
<feature type="chain" id="PRO_0000101112" description="Threonine--tRNA ligase catalytic subunit">
    <location>
        <begin position="1"/>
        <end position="549"/>
    </location>
</feature>
<feature type="region of interest" description="Catalytic" evidence="3">
    <location>
        <begin position="142"/>
        <end position="437"/>
    </location>
</feature>
<feature type="binding site" evidence="3">
    <location>
        <position position="235"/>
    </location>
    <ligand>
        <name>Zn(2+)</name>
        <dbReference type="ChEBI" id="CHEBI:29105"/>
    </ligand>
</feature>
<feature type="binding site" evidence="3">
    <location>
        <position position="286"/>
    </location>
    <ligand>
        <name>Zn(2+)</name>
        <dbReference type="ChEBI" id="CHEBI:29105"/>
    </ligand>
</feature>
<feature type="binding site" evidence="3">
    <location>
        <position position="414"/>
    </location>
    <ligand>
        <name>Zn(2+)</name>
        <dbReference type="ChEBI" id="CHEBI:29105"/>
    </ligand>
</feature>
<reference key="1">
    <citation type="journal article" date="2005" name="J. Bacteriol.">
        <title>The genome of Sulfolobus acidocaldarius, a model organism of the Crenarchaeota.</title>
        <authorList>
            <person name="Chen L."/>
            <person name="Bruegger K."/>
            <person name="Skovgaard M."/>
            <person name="Redder P."/>
            <person name="She Q."/>
            <person name="Torarinsson E."/>
            <person name="Greve B."/>
            <person name="Awayez M."/>
            <person name="Zibat A."/>
            <person name="Klenk H.-P."/>
            <person name="Garrett R.A."/>
        </authorList>
    </citation>
    <scope>NUCLEOTIDE SEQUENCE [LARGE SCALE GENOMIC DNA]</scope>
    <source>
        <strain>ATCC 33909 / DSM 639 / JCM 8929 / NBRC 15157 / NCIMB 11770</strain>
    </source>
</reference>
<keyword id="KW-0030">Aminoacyl-tRNA synthetase</keyword>
<keyword id="KW-0067">ATP-binding</keyword>
<keyword id="KW-0963">Cytoplasm</keyword>
<keyword id="KW-0436">Ligase</keyword>
<keyword id="KW-0479">Metal-binding</keyword>
<keyword id="KW-0547">Nucleotide-binding</keyword>
<keyword id="KW-0648">Protein biosynthesis</keyword>
<keyword id="KW-1185">Reference proteome</keyword>
<keyword id="KW-0694">RNA-binding</keyword>
<keyword id="KW-0820">tRNA-binding</keyword>
<keyword id="KW-0862">Zinc</keyword>
<accession>Q4J9C4</accession>
<protein>
    <recommendedName>
        <fullName>Threonine--tRNA ligase catalytic subunit</fullName>
        <ecNumber evidence="3">6.1.1.3</ecNumber>
    </recommendedName>
    <alternativeName>
        <fullName>Threonyl-tRNA synthetase catalytic subunit</fullName>
        <shortName>ThrRS-cat</shortName>
    </alternativeName>
</protein>
<gene>
    <name evidence="4" type="primary">thrS-cat</name>
    <name evidence="3" type="synonym">thrS</name>
    <name type="ordered locus">Saci_1261</name>
</gene>
<organism>
    <name type="scientific">Sulfolobus acidocaldarius (strain ATCC 33909 / DSM 639 / JCM 8929 / NBRC 15157 / NCIMB 11770)</name>
    <dbReference type="NCBI Taxonomy" id="330779"/>
    <lineage>
        <taxon>Archaea</taxon>
        <taxon>Thermoproteota</taxon>
        <taxon>Thermoprotei</taxon>
        <taxon>Sulfolobales</taxon>
        <taxon>Sulfolobaceae</taxon>
        <taxon>Sulfolobus</taxon>
    </lineage>
</organism>
<comment type="function">
    <text evidence="1">Catalyzes the attachment of threonine to tRNA(Thr) in a two-step reaction: L-threonine is first activated by ATP to form Thr-AMP and then transferred to the acceptor end of tRNA(Thr). Also activates L-serine and transfers it to tRNA(Thr) but cannot deacylate incorrectly charged amino acid; unlike most archaea the editing function is found in a freestanding protein.</text>
</comment>
<comment type="catalytic activity">
    <reaction evidence="3">
        <text>tRNA(Thr) + L-threonine + ATP = L-threonyl-tRNA(Thr) + AMP + diphosphate + H(+)</text>
        <dbReference type="Rhea" id="RHEA:24624"/>
        <dbReference type="Rhea" id="RHEA-COMP:9670"/>
        <dbReference type="Rhea" id="RHEA-COMP:9704"/>
        <dbReference type="ChEBI" id="CHEBI:15378"/>
        <dbReference type="ChEBI" id="CHEBI:30616"/>
        <dbReference type="ChEBI" id="CHEBI:33019"/>
        <dbReference type="ChEBI" id="CHEBI:57926"/>
        <dbReference type="ChEBI" id="CHEBI:78442"/>
        <dbReference type="ChEBI" id="CHEBI:78534"/>
        <dbReference type="ChEBI" id="CHEBI:456215"/>
        <dbReference type="EC" id="6.1.1.3"/>
    </reaction>
</comment>
<comment type="cofactor">
    <cofactor evidence="3">
        <name>Zn(2+)</name>
        <dbReference type="ChEBI" id="CHEBI:29105"/>
    </cofactor>
    <text evidence="3">Binds 1 zinc ion per subunit.</text>
</comment>
<comment type="subunit">
    <text evidence="1 2">Homodimer (By similarity). Probably interacts with its editing subunit (By similarity).</text>
</comment>
<comment type="subcellular location">
    <subcellularLocation>
        <location evidence="3">Cytoplasm</location>
    </subcellularLocation>
</comment>
<comment type="similarity">
    <text evidence="3">Belongs to the class-II aminoacyl-tRNA synthetase family.</text>
</comment>
<comment type="sequence caution" evidence="4">
    <conflict type="erroneous initiation">
        <sequence resource="EMBL-CDS" id="AAY80606"/>
    </conflict>
    <text>Extended N-terminus.</text>
</comment>
<proteinExistence type="inferred from homology"/>
<evidence type="ECO:0000250" key="1">
    <source>
        <dbReference type="UniProtKB" id="Q97VW8"/>
    </source>
</evidence>
<evidence type="ECO:0000250" key="2">
    <source>
        <dbReference type="UniProtKB" id="Q9YDW0"/>
    </source>
</evidence>
<evidence type="ECO:0000255" key="3">
    <source>
        <dbReference type="HAMAP-Rule" id="MF_00184"/>
    </source>
</evidence>
<evidence type="ECO:0000305" key="4"/>
<sequence length="549" mass="64036">MESYKEVWLKAGLIYALNLLSSGNLKPVEIGLGERYFYVDIDSPDILTLDEAKDFAKYNQYDYQLVEDNRGSITVVYNGHQIKLNGGKPNQNVHPKYFQILSISVHHPSPEKQYVRVLGVGFEKEEQLKDYLNWLEKVSEYDHRIIGDRLDLFSFPEEAPPGVVLFHPNGQIIRKEMMRFMEEINDSMGYKEVYTSHVYRSLLWKISGHYDYYKDKMLLFEIDNDEELGIKPMNCPAHILIYKSKVRSYKDLPIRFSEFGHVYRWEKKGELYGLLRVRGFTQDDGHIFLREDQIKDEIKLLMKKTLDVLAIFGFKGDDVRVNLSTRPDESIGTDEQWNKATDALISALNELNIKYEVKEKEGAFYGPKIDFDIRDSLSRWWQLSTIQVDFNLPERFKLEYVDKDGSKKRPVMVHRAIYGSIDRFMAILLEHFRGKLPTWLSPIQVRVLPITDEIEDYGNSLMAKLRENKIRVDMDSGEETLSKRIKKAYDDGVPYLIIVGRKEKDEGKVTVRARGNIEIRGINVEKFVQALVEEIRNKDLNQSAVSKLK</sequence>
<dbReference type="EC" id="6.1.1.3" evidence="3"/>
<dbReference type="EMBL" id="CP000077">
    <property type="protein sequence ID" value="AAY80606.1"/>
    <property type="status" value="ALT_INIT"/>
    <property type="molecule type" value="Genomic_DNA"/>
</dbReference>
<dbReference type="RefSeq" id="WP_015385586.1">
    <property type="nucleotide sequence ID" value="NC_007181.1"/>
</dbReference>
<dbReference type="SMR" id="Q4J9C4"/>
<dbReference type="STRING" id="330779.Saci_1261"/>
<dbReference type="GeneID" id="14551766"/>
<dbReference type="GeneID" id="78441607"/>
<dbReference type="KEGG" id="sai:Saci_1261"/>
<dbReference type="PATRIC" id="fig|330779.12.peg.1222"/>
<dbReference type="eggNOG" id="arCOG00401">
    <property type="taxonomic scope" value="Archaea"/>
</dbReference>
<dbReference type="HOGENOM" id="CLU_008554_2_2_2"/>
<dbReference type="Proteomes" id="UP000001018">
    <property type="component" value="Chromosome"/>
</dbReference>
<dbReference type="GO" id="GO:0005737">
    <property type="term" value="C:cytoplasm"/>
    <property type="evidence" value="ECO:0007669"/>
    <property type="project" value="UniProtKB-SubCell"/>
</dbReference>
<dbReference type="GO" id="GO:0005524">
    <property type="term" value="F:ATP binding"/>
    <property type="evidence" value="ECO:0007669"/>
    <property type="project" value="UniProtKB-UniRule"/>
</dbReference>
<dbReference type="GO" id="GO:0046872">
    <property type="term" value="F:metal ion binding"/>
    <property type="evidence" value="ECO:0007669"/>
    <property type="project" value="UniProtKB-KW"/>
</dbReference>
<dbReference type="GO" id="GO:0004829">
    <property type="term" value="F:threonine-tRNA ligase activity"/>
    <property type="evidence" value="ECO:0007669"/>
    <property type="project" value="UniProtKB-UniRule"/>
</dbReference>
<dbReference type="GO" id="GO:0000049">
    <property type="term" value="F:tRNA binding"/>
    <property type="evidence" value="ECO:0007669"/>
    <property type="project" value="UniProtKB-KW"/>
</dbReference>
<dbReference type="GO" id="GO:0006435">
    <property type="term" value="P:threonyl-tRNA aminoacylation"/>
    <property type="evidence" value="ECO:0007669"/>
    <property type="project" value="UniProtKB-UniRule"/>
</dbReference>
<dbReference type="CDD" id="cd00860">
    <property type="entry name" value="ThrRS_anticodon"/>
    <property type="match status" value="1"/>
</dbReference>
<dbReference type="CDD" id="cd00771">
    <property type="entry name" value="ThrRS_core"/>
    <property type="match status" value="1"/>
</dbReference>
<dbReference type="FunFam" id="3.30.930.10:FF:000002">
    <property type="entry name" value="Threonine--tRNA ligase"/>
    <property type="match status" value="1"/>
</dbReference>
<dbReference type="FunFam" id="3.40.50.800:FF:000001">
    <property type="entry name" value="Threonine--tRNA ligase"/>
    <property type="match status" value="1"/>
</dbReference>
<dbReference type="Gene3D" id="3.40.50.800">
    <property type="entry name" value="Anticodon-binding domain"/>
    <property type="match status" value="1"/>
</dbReference>
<dbReference type="Gene3D" id="3.30.930.10">
    <property type="entry name" value="Bira Bifunctional Protein, Domain 2"/>
    <property type="match status" value="1"/>
</dbReference>
<dbReference type="HAMAP" id="MF_00184">
    <property type="entry name" value="Thr_tRNA_synth"/>
    <property type="match status" value="1"/>
</dbReference>
<dbReference type="InterPro" id="IPR002314">
    <property type="entry name" value="aa-tRNA-synt_IIb"/>
</dbReference>
<dbReference type="InterPro" id="IPR006195">
    <property type="entry name" value="aa-tRNA-synth_II"/>
</dbReference>
<dbReference type="InterPro" id="IPR045864">
    <property type="entry name" value="aa-tRNA-synth_II/BPL/LPL"/>
</dbReference>
<dbReference type="InterPro" id="IPR004154">
    <property type="entry name" value="Anticodon-bd"/>
</dbReference>
<dbReference type="InterPro" id="IPR036621">
    <property type="entry name" value="Anticodon-bd_dom_sf"/>
</dbReference>
<dbReference type="InterPro" id="IPR002320">
    <property type="entry name" value="Thr-tRNA-ligase_IIa"/>
</dbReference>
<dbReference type="InterPro" id="IPR018163">
    <property type="entry name" value="Thr/Ala-tRNA-synth_IIc_edit"/>
</dbReference>
<dbReference type="InterPro" id="IPR047246">
    <property type="entry name" value="ThrRS_anticodon"/>
</dbReference>
<dbReference type="InterPro" id="IPR033728">
    <property type="entry name" value="ThrRS_core"/>
</dbReference>
<dbReference type="NCBIfam" id="TIGR00418">
    <property type="entry name" value="thrS"/>
    <property type="match status" value="1"/>
</dbReference>
<dbReference type="PANTHER" id="PTHR11451:SF44">
    <property type="entry name" value="THREONINE--TRNA LIGASE, CHLOROPLASTIC_MITOCHONDRIAL 2"/>
    <property type="match status" value="1"/>
</dbReference>
<dbReference type="PANTHER" id="PTHR11451">
    <property type="entry name" value="THREONINE-TRNA LIGASE"/>
    <property type="match status" value="1"/>
</dbReference>
<dbReference type="Pfam" id="PF03129">
    <property type="entry name" value="HGTP_anticodon"/>
    <property type="match status" value="1"/>
</dbReference>
<dbReference type="Pfam" id="PF00587">
    <property type="entry name" value="tRNA-synt_2b"/>
    <property type="match status" value="1"/>
</dbReference>
<dbReference type="PRINTS" id="PR01047">
    <property type="entry name" value="TRNASYNTHTHR"/>
</dbReference>
<dbReference type="SUPFAM" id="SSF52954">
    <property type="entry name" value="Class II aaRS ABD-related"/>
    <property type="match status" value="1"/>
</dbReference>
<dbReference type="SUPFAM" id="SSF55681">
    <property type="entry name" value="Class II aaRS and biotin synthetases"/>
    <property type="match status" value="1"/>
</dbReference>
<dbReference type="SUPFAM" id="SSF55186">
    <property type="entry name" value="ThrRS/AlaRS common domain"/>
    <property type="match status" value="1"/>
</dbReference>
<dbReference type="PROSITE" id="PS50862">
    <property type="entry name" value="AA_TRNA_LIGASE_II"/>
    <property type="match status" value="1"/>
</dbReference>